<name>FTSH_MYCBO</name>
<comment type="function">
    <text evidence="1">Acts as a processive, ATP-dependent zinc metallopeptidase for both cytoplasmic and membrane proteins. Plays a role in the quality control of integral membrane proteins.</text>
</comment>
<comment type="cofactor">
    <cofactor evidence="1">
        <name>Zn(2+)</name>
        <dbReference type="ChEBI" id="CHEBI:29105"/>
    </cofactor>
    <text evidence="1">Binds 1 zinc ion per subunit.</text>
</comment>
<comment type="subunit">
    <text evidence="1">Homohexamer.</text>
</comment>
<comment type="subcellular location">
    <subcellularLocation>
        <location evidence="1">Cell membrane</location>
        <topology evidence="1">Multi-pass membrane protein</topology>
        <orientation evidence="1">Cytoplasmic side</orientation>
    </subcellularLocation>
</comment>
<comment type="similarity">
    <text evidence="1">In the central section; belongs to the AAA ATPase family.</text>
</comment>
<comment type="similarity">
    <text evidence="1">In the C-terminal section; belongs to the peptidase M41 family.</text>
</comment>
<reference key="1">
    <citation type="journal article" date="2003" name="Proc. Natl. Acad. Sci. U.S.A.">
        <title>The complete genome sequence of Mycobacterium bovis.</title>
        <authorList>
            <person name="Garnier T."/>
            <person name="Eiglmeier K."/>
            <person name="Camus J.-C."/>
            <person name="Medina N."/>
            <person name="Mansoor H."/>
            <person name="Pryor M."/>
            <person name="Duthoy S."/>
            <person name="Grondin S."/>
            <person name="Lacroix C."/>
            <person name="Monsempe C."/>
            <person name="Simon S."/>
            <person name="Harris B."/>
            <person name="Atkin R."/>
            <person name="Doggett J."/>
            <person name="Mayes R."/>
            <person name="Keating L."/>
            <person name="Wheeler P.R."/>
            <person name="Parkhill J."/>
            <person name="Barrell B.G."/>
            <person name="Cole S.T."/>
            <person name="Gordon S.V."/>
            <person name="Hewinson R.G."/>
        </authorList>
    </citation>
    <scope>NUCLEOTIDE SEQUENCE [LARGE SCALE GENOMIC DNA]</scope>
    <source>
        <strain>ATCC BAA-935 / AF2122/97</strain>
    </source>
</reference>
<reference key="2">
    <citation type="journal article" date="2017" name="Genome Announc.">
        <title>Updated reference genome sequence and annotation of Mycobacterium bovis AF2122/97.</title>
        <authorList>
            <person name="Malone K.M."/>
            <person name="Farrell D."/>
            <person name="Stuber T.P."/>
            <person name="Schubert O.T."/>
            <person name="Aebersold R."/>
            <person name="Robbe-Austerman S."/>
            <person name="Gordon S.V."/>
        </authorList>
    </citation>
    <scope>NUCLEOTIDE SEQUENCE [LARGE SCALE GENOMIC DNA]</scope>
    <scope>GENOME REANNOTATION</scope>
    <source>
        <strain>ATCC BAA-935 / AF2122/97</strain>
    </source>
</reference>
<gene>
    <name evidence="1" type="primary">ftsH</name>
    <name type="ordered locus">BQ2027_MB3640C</name>
</gene>
<evidence type="ECO:0000255" key="1">
    <source>
        <dbReference type="HAMAP-Rule" id="MF_01458"/>
    </source>
</evidence>
<evidence type="ECO:0000256" key="2">
    <source>
        <dbReference type="SAM" id="MobiDB-lite"/>
    </source>
</evidence>
<protein>
    <recommendedName>
        <fullName evidence="1">ATP-dependent zinc metalloprotease FtsH</fullName>
        <ecNumber evidence="1">3.4.24.-</ecNumber>
    </recommendedName>
</protein>
<keyword id="KW-0067">ATP-binding</keyword>
<keyword id="KW-1003">Cell membrane</keyword>
<keyword id="KW-0378">Hydrolase</keyword>
<keyword id="KW-0472">Membrane</keyword>
<keyword id="KW-0479">Metal-binding</keyword>
<keyword id="KW-0482">Metalloprotease</keyword>
<keyword id="KW-0547">Nucleotide-binding</keyword>
<keyword id="KW-0645">Protease</keyword>
<keyword id="KW-1185">Reference proteome</keyword>
<keyword id="KW-0812">Transmembrane</keyword>
<keyword id="KW-1133">Transmembrane helix</keyword>
<keyword id="KW-0862">Zinc</keyword>
<proteinExistence type="inferred from homology"/>
<dbReference type="EC" id="3.4.24.-" evidence="1"/>
<dbReference type="EMBL" id="LT708304">
    <property type="protein sequence ID" value="SIU02268.1"/>
    <property type="molecule type" value="Genomic_DNA"/>
</dbReference>
<dbReference type="RefSeq" id="NP_857279.1">
    <property type="nucleotide sequence ID" value="NC_002945.3"/>
</dbReference>
<dbReference type="RefSeq" id="WP_003419543.1">
    <property type="nucleotide sequence ID" value="NC_002945.4"/>
</dbReference>
<dbReference type="SMR" id="P0A4V9"/>
<dbReference type="MEROPS" id="M41.015"/>
<dbReference type="KEGG" id="mbo:BQ2027_MB3640C"/>
<dbReference type="PATRIC" id="fig|233413.5.peg.3986"/>
<dbReference type="Proteomes" id="UP000001419">
    <property type="component" value="Chromosome"/>
</dbReference>
<dbReference type="GO" id="GO:0005886">
    <property type="term" value="C:plasma membrane"/>
    <property type="evidence" value="ECO:0007669"/>
    <property type="project" value="UniProtKB-SubCell"/>
</dbReference>
<dbReference type="GO" id="GO:0005524">
    <property type="term" value="F:ATP binding"/>
    <property type="evidence" value="ECO:0007669"/>
    <property type="project" value="UniProtKB-UniRule"/>
</dbReference>
<dbReference type="GO" id="GO:0016887">
    <property type="term" value="F:ATP hydrolysis activity"/>
    <property type="evidence" value="ECO:0007669"/>
    <property type="project" value="UniProtKB-UniRule"/>
</dbReference>
<dbReference type="GO" id="GO:0004176">
    <property type="term" value="F:ATP-dependent peptidase activity"/>
    <property type="evidence" value="ECO:0007669"/>
    <property type="project" value="InterPro"/>
</dbReference>
<dbReference type="GO" id="GO:0004222">
    <property type="term" value="F:metalloendopeptidase activity"/>
    <property type="evidence" value="ECO:0007669"/>
    <property type="project" value="InterPro"/>
</dbReference>
<dbReference type="GO" id="GO:0008270">
    <property type="term" value="F:zinc ion binding"/>
    <property type="evidence" value="ECO:0007669"/>
    <property type="project" value="UniProtKB-UniRule"/>
</dbReference>
<dbReference type="GO" id="GO:0030163">
    <property type="term" value="P:protein catabolic process"/>
    <property type="evidence" value="ECO:0007669"/>
    <property type="project" value="UniProtKB-UniRule"/>
</dbReference>
<dbReference type="GO" id="GO:0006508">
    <property type="term" value="P:proteolysis"/>
    <property type="evidence" value="ECO:0007669"/>
    <property type="project" value="UniProtKB-KW"/>
</dbReference>
<dbReference type="CDD" id="cd19501">
    <property type="entry name" value="RecA-like_FtsH"/>
    <property type="match status" value="1"/>
</dbReference>
<dbReference type="FunFam" id="1.10.8.60:FF:000001">
    <property type="entry name" value="ATP-dependent zinc metalloprotease FtsH"/>
    <property type="match status" value="1"/>
</dbReference>
<dbReference type="FunFam" id="1.20.58.760:FF:000002">
    <property type="entry name" value="ATP-dependent zinc metalloprotease FtsH"/>
    <property type="match status" value="1"/>
</dbReference>
<dbReference type="FunFam" id="3.40.50.300:FF:000001">
    <property type="entry name" value="ATP-dependent zinc metalloprotease FtsH"/>
    <property type="match status" value="1"/>
</dbReference>
<dbReference type="Gene3D" id="1.10.8.60">
    <property type="match status" value="1"/>
</dbReference>
<dbReference type="Gene3D" id="3.40.50.300">
    <property type="entry name" value="P-loop containing nucleotide triphosphate hydrolases"/>
    <property type="match status" value="1"/>
</dbReference>
<dbReference type="Gene3D" id="1.20.58.760">
    <property type="entry name" value="Peptidase M41"/>
    <property type="match status" value="1"/>
</dbReference>
<dbReference type="HAMAP" id="MF_01458">
    <property type="entry name" value="FtsH"/>
    <property type="match status" value="1"/>
</dbReference>
<dbReference type="InterPro" id="IPR003593">
    <property type="entry name" value="AAA+_ATPase"/>
</dbReference>
<dbReference type="InterPro" id="IPR041569">
    <property type="entry name" value="AAA_lid_3"/>
</dbReference>
<dbReference type="InterPro" id="IPR003959">
    <property type="entry name" value="ATPase_AAA_core"/>
</dbReference>
<dbReference type="InterPro" id="IPR003960">
    <property type="entry name" value="ATPase_AAA_CS"/>
</dbReference>
<dbReference type="InterPro" id="IPR005936">
    <property type="entry name" value="FtsH"/>
</dbReference>
<dbReference type="InterPro" id="IPR027417">
    <property type="entry name" value="P-loop_NTPase"/>
</dbReference>
<dbReference type="InterPro" id="IPR011546">
    <property type="entry name" value="Pept_M41_FtsH_extracell"/>
</dbReference>
<dbReference type="InterPro" id="IPR000642">
    <property type="entry name" value="Peptidase_M41"/>
</dbReference>
<dbReference type="InterPro" id="IPR037219">
    <property type="entry name" value="Peptidase_M41-like"/>
</dbReference>
<dbReference type="NCBIfam" id="TIGR01241">
    <property type="entry name" value="FtsH_fam"/>
    <property type="match status" value="1"/>
</dbReference>
<dbReference type="PANTHER" id="PTHR23076:SF97">
    <property type="entry name" value="ATP-DEPENDENT ZINC METALLOPROTEASE YME1L1"/>
    <property type="match status" value="1"/>
</dbReference>
<dbReference type="PANTHER" id="PTHR23076">
    <property type="entry name" value="METALLOPROTEASE M41 FTSH"/>
    <property type="match status" value="1"/>
</dbReference>
<dbReference type="Pfam" id="PF00004">
    <property type="entry name" value="AAA"/>
    <property type="match status" value="1"/>
</dbReference>
<dbReference type="Pfam" id="PF17862">
    <property type="entry name" value="AAA_lid_3"/>
    <property type="match status" value="1"/>
</dbReference>
<dbReference type="Pfam" id="PF06480">
    <property type="entry name" value="FtsH_ext"/>
    <property type="match status" value="1"/>
</dbReference>
<dbReference type="Pfam" id="PF01434">
    <property type="entry name" value="Peptidase_M41"/>
    <property type="match status" value="1"/>
</dbReference>
<dbReference type="SMART" id="SM00382">
    <property type="entry name" value="AAA"/>
    <property type="match status" value="1"/>
</dbReference>
<dbReference type="SUPFAM" id="SSF140990">
    <property type="entry name" value="FtsH protease domain-like"/>
    <property type="match status" value="1"/>
</dbReference>
<dbReference type="SUPFAM" id="SSF52540">
    <property type="entry name" value="P-loop containing nucleoside triphosphate hydrolases"/>
    <property type="match status" value="1"/>
</dbReference>
<dbReference type="PROSITE" id="PS00674">
    <property type="entry name" value="AAA"/>
    <property type="match status" value="1"/>
</dbReference>
<feature type="chain" id="PRO_0000084642" description="ATP-dependent zinc metalloprotease FtsH">
    <location>
        <begin position="1"/>
        <end position="760"/>
    </location>
</feature>
<feature type="topological domain" description="Cytoplasmic" evidence="1">
    <location>
        <begin position="1"/>
        <end position="5"/>
    </location>
</feature>
<feature type="transmembrane region" description="Helical" evidence="1">
    <location>
        <begin position="6"/>
        <end position="26"/>
    </location>
</feature>
<feature type="topological domain" description="Extracellular" evidence="1">
    <location>
        <begin position="27"/>
        <end position="110"/>
    </location>
</feature>
<feature type="transmembrane region" description="Helical" evidence="1">
    <location>
        <begin position="111"/>
        <end position="131"/>
    </location>
</feature>
<feature type="topological domain" description="Cytoplasmic" evidence="1">
    <location>
        <begin position="132"/>
        <end position="760"/>
    </location>
</feature>
<feature type="region of interest" description="Disordered" evidence="2">
    <location>
        <begin position="616"/>
        <end position="760"/>
    </location>
</feature>
<feature type="compositionally biased region" description="Low complexity" evidence="2">
    <location>
        <begin position="650"/>
        <end position="669"/>
    </location>
</feature>
<feature type="compositionally biased region" description="Acidic residues" evidence="2">
    <location>
        <begin position="740"/>
        <end position="750"/>
    </location>
</feature>
<feature type="active site" evidence="1">
    <location>
        <position position="426"/>
    </location>
</feature>
<feature type="binding site" evidence="1">
    <location>
        <begin position="203"/>
        <end position="210"/>
    </location>
    <ligand>
        <name>ATP</name>
        <dbReference type="ChEBI" id="CHEBI:30616"/>
    </ligand>
</feature>
<feature type="binding site" evidence="1">
    <location>
        <position position="425"/>
    </location>
    <ligand>
        <name>Zn(2+)</name>
        <dbReference type="ChEBI" id="CHEBI:29105"/>
        <note>catalytic</note>
    </ligand>
</feature>
<feature type="binding site" evidence="1">
    <location>
        <position position="429"/>
    </location>
    <ligand>
        <name>Zn(2+)</name>
        <dbReference type="ChEBI" id="CHEBI:29105"/>
        <note>catalytic</note>
    </ligand>
</feature>
<feature type="binding site" evidence="1">
    <location>
        <position position="501"/>
    </location>
    <ligand>
        <name>Zn(2+)</name>
        <dbReference type="ChEBI" id="CHEBI:29105"/>
        <note>catalytic</note>
    </ligand>
</feature>
<accession>P0A4V9</accession>
<accession>A0A1R3Y4R0</accession>
<accession>P96942</accession>
<accession>X2BPW9</accession>
<organism>
    <name type="scientific">Mycobacterium bovis (strain ATCC BAA-935 / AF2122/97)</name>
    <dbReference type="NCBI Taxonomy" id="233413"/>
    <lineage>
        <taxon>Bacteria</taxon>
        <taxon>Bacillati</taxon>
        <taxon>Actinomycetota</taxon>
        <taxon>Actinomycetes</taxon>
        <taxon>Mycobacteriales</taxon>
        <taxon>Mycobacteriaceae</taxon>
        <taxon>Mycobacterium</taxon>
        <taxon>Mycobacterium tuberculosis complex</taxon>
    </lineage>
</organism>
<sequence>MNRKNVTRTITAIAVVVLLGWSFFYFSDDTRGYKPVDTSVAITQINGDNVKSAQIDDREQQLRLILKKGNNETDGSEKVITKYPTGYAVDLFNALSAKNAKVSTVVNQGSILGELLVYVLPLLLLVGLFVMFSRMQGGARMGFGFGKSRAKQLSKDMPKTTFADVAGVDEAVEELYEIKDFLQNPSRYQALGAKIPKGVLLYGPPGTGKTLLARAVAGEAGVPFFTISGSDFVEMFVGVGASRVRDLFEQAKQNSPCIIFVDEIDAVGRQRGAGLGGGHDEREQTLNQLLVEMDGFGDRAGVILIAATNRPDILDPALLRPGRFDRQIPVSNPDLAGRRAVLRVHSKGKPMAADADLDGLAKRTVGMTGADLANVINEAALLTARENGTVITGPALEEAVDRVIGGPRRKGRIISEQEKKITAYHEGGHTLAAWAMPDIEPIYKVTILARGRTGGHAVAVPEEDKGLRTRSEMIAQLVFAMGGRAAEELVFREPTTGAVSDIEQATKIARSMVTEFGMSSKLGAVKYGSEHGDPFLGRTMGTQPDYSHEVAREIDEEVRKLIEAAHTEAWEILTEYRDVLDTLAGELLEKETLHRPELESIFADVEKRPRLTMFDDFGGRIPSDKPPIKTPGELAIERGEPWPQPVPEPAFKAAIAQATQAAEAARSDAGQTGHGANGSPAGTHRSGDRQYGSTQPDYGAPAGWHAPGWPPRSSHRPSYSGEPAPTYPGQPYPTGQADPGSDESSAEQDDEVSRTKPAHG</sequence>